<evidence type="ECO:0000255" key="1"/>
<evidence type="ECO:0000305" key="2"/>
<gene>
    <name type="primary">SIFV0074</name>
</gene>
<organism>
    <name type="scientific">Sulfolobus islandicus filamentous virus (isolate Iceland/Hveragerdi)</name>
    <name type="common">SIFV</name>
    <dbReference type="NCBI Taxonomy" id="654908"/>
    <lineage>
        <taxon>Viruses</taxon>
        <taxon>Adnaviria</taxon>
        <taxon>Zilligvirae</taxon>
        <taxon>Taleaviricota</taxon>
        <taxon>Tokiviricetes</taxon>
        <taxon>Ligamenvirales</taxon>
        <taxon>Lipothrixviridae</taxon>
        <taxon>Betalipothrixvirus</taxon>
        <taxon>Sulfolobus islandicus filamentous virus</taxon>
    </lineage>
</organism>
<name>Y074_SIFVH</name>
<protein>
    <recommendedName>
        <fullName>Putative transmembrane protein 74</fullName>
    </recommendedName>
</protein>
<dbReference type="EMBL" id="AF440571">
    <property type="protein sequence ID" value="AAL27783.1"/>
    <property type="molecule type" value="Genomic_DNA"/>
</dbReference>
<dbReference type="RefSeq" id="NP_445737.1">
    <property type="nucleotide sequence ID" value="NC_003214.2"/>
</dbReference>
<dbReference type="SMR" id="Q914F8"/>
<dbReference type="GeneID" id="922332"/>
<dbReference type="KEGG" id="vg:922332"/>
<dbReference type="Proteomes" id="UP000007017">
    <property type="component" value="Segment"/>
</dbReference>
<dbReference type="GO" id="GO:0033644">
    <property type="term" value="C:host cell membrane"/>
    <property type="evidence" value="ECO:0007669"/>
    <property type="project" value="UniProtKB-SubCell"/>
</dbReference>
<dbReference type="GO" id="GO:0016020">
    <property type="term" value="C:membrane"/>
    <property type="evidence" value="ECO:0007669"/>
    <property type="project" value="UniProtKB-KW"/>
</dbReference>
<accession>Q914F8</accession>
<sequence>MNYFSVIMYLINSVIFTFMIFLTFVNPSLLNDQYWVYILIGFFTAIVFHSGYQAGKGSEK</sequence>
<keyword id="KW-1043">Host membrane</keyword>
<keyword id="KW-0472">Membrane</keyword>
<keyword id="KW-1185">Reference proteome</keyword>
<keyword id="KW-0812">Transmembrane</keyword>
<keyword id="KW-1133">Transmembrane helix</keyword>
<comment type="subcellular location">
    <subcellularLocation>
        <location evidence="2">Host membrane</location>
        <topology evidence="2">Multi-pass membrane protein</topology>
    </subcellularLocation>
</comment>
<proteinExistence type="predicted"/>
<organismHost>
    <name type="scientific">Saccharolobus islandicus</name>
    <name type="common">Sulfolobus islandicus</name>
    <dbReference type="NCBI Taxonomy" id="43080"/>
</organismHost>
<reference key="1">
    <citation type="journal article" date="2000" name="Virology">
        <title>A novel lipothrixvirus, SIFV, of the extremely thermophilic crenarchaeon Sulfolobus.</title>
        <authorList>
            <person name="Arnold H.P."/>
            <person name="Zillig W."/>
            <person name="Ziese U."/>
            <person name="Holz I."/>
            <person name="Crosby M."/>
            <person name="Utterback T."/>
            <person name="Weidmann J.F."/>
            <person name="Umayam L.A."/>
            <person name="Teffera K."/>
            <person name="Kristjanson J.K."/>
            <person name="Klenk H.P."/>
            <person name="Nelson K.E."/>
            <person name="Fraser C.M."/>
        </authorList>
    </citation>
    <scope>NUCLEOTIDE SEQUENCE [GENOMIC DNA]</scope>
</reference>
<feature type="chain" id="PRO_0000385427" description="Putative transmembrane protein 74">
    <location>
        <begin position="1"/>
        <end position="60"/>
    </location>
</feature>
<feature type="transmembrane region" description="Helical" evidence="1">
    <location>
        <begin position="4"/>
        <end position="24"/>
    </location>
</feature>
<feature type="transmembrane region" description="Helical" evidence="1">
    <location>
        <begin position="35"/>
        <end position="55"/>
    </location>
</feature>